<sequence>MTTGFLQKIFGSRNQRLVKQYQKTVATINALETQIEKLTDDQLRGKTDEFRQRVAAGESLDKLLPEAFAVCREASRRVLKMRHFDVQMIGGMVLHYGKIAEMRTGEGKTLVATLPVYLNALAGRGVHVVTVNDYLAQRDAEWMARLYNFLGLSVGINLSGMEHDQKQQAYAADITYGTNNEFGFDYLRDNMVYETDARVQRALNFAVVDEVDSILIDEARTPLIISGQAEDHTELYVRMNALPPLLERQIGEEKADGTGVEKPGDYTLDEKARQVFLTESGHEKAERLLAEWGLIGEGESLYAPQNITLMHHVYAALRAHTLFHKDQHYVVQNGEVVIVDEFTGRLMAGRRWSDGLHQAVEAKEHVKIQSENQTLASITFQNYFRMYAKLAGMTGTADTEAYEFNEIYGLETVVIPTNRPPKRIDKQDQIYKTAKERYDAVIRDIRDCYERGQPVLVGTTSIENSELLSHLLKQVGLPHEVLNAKQHEREAAIVAEAGRPKRITIATNMAGRGTDIVLGGNAEKQAAFIEADDAIPADEKARRIQKLHDEWETLHEEVKAAGGLHIIGTERHESRRIDNQLRGRAGRQGDPGSSRFYLSLDDPLLRIFAGDRVRSIMDRLKMPEGEAIEAGIVTRSIESAQRKVEARNFDIRKQLLEYDDVSNDQRKVIYQQRNELLEAHDITETITAMRHGVITEVVRQFVPEGSIEEQWDVPELEEALRNDWQLDLAIQEMVNESSSITAEEILDAVMTAADEQYEAKVAMVGRESFSAFERSVMLQTVDRLWREHLAALDHLRQGIHLRGYAQKNPKQEYKREAFELFAAMLDAIKQEVTRIVMNVQIQSPEQLEEAAEQIEERGGHLENVEYQHADYADAGAPVANVTAAAAATATADMVGSAMTHSGPGGEMPKVGRNDPCPCGSGKKYKQCHGKLS</sequence>
<reference key="1">
    <citation type="submission" date="2006-05" db="EMBL/GenBank/DDBJ databases">
        <title>Complete sequence of chromosome 1 of Burkholderia cenocepacia AU 1054.</title>
        <authorList>
            <consortium name="US DOE Joint Genome Institute"/>
            <person name="Copeland A."/>
            <person name="Lucas S."/>
            <person name="Lapidus A."/>
            <person name="Barry K."/>
            <person name="Detter J.C."/>
            <person name="Glavina del Rio T."/>
            <person name="Hammon N."/>
            <person name="Israni S."/>
            <person name="Dalin E."/>
            <person name="Tice H."/>
            <person name="Pitluck S."/>
            <person name="Chain P."/>
            <person name="Malfatti S."/>
            <person name="Shin M."/>
            <person name="Vergez L."/>
            <person name="Schmutz J."/>
            <person name="Larimer F."/>
            <person name="Land M."/>
            <person name="Hauser L."/>
            <person name="Kyrpides N."/>
            <person name="Lykidis A."/>
            <person name="LiPuma J.J."/>
            <person name="Konstantinidis K."/>
            <person name="Tiedje J.M."/>
            <person name="Richardson P."/>
        </authorList>
    </citation>
    <scope>NUCLEOTIDE SEQUENCE [LARGE SCALE GENOMIC DNA]</scope>
    <source>
        <strain>AU 1054</strain>
    </source>
</reference>
<evidence type="ECO:0000255" key="1">
    <source>
        <dbReference type="HAMAP-Rule" id="MF_01382"/>
    </source>
</evidence>
<proteinExistence type="inferred from homology"/>
<protein>
    <recommendedName>
        <fullName evidence="1">Protein translocase subunit SecA</fullName>
        <ecNumber evidence="1">7.4.2.8</ecNumber>
    </recommendedName>
</protein>
<gene>
    <name evidence="1" type="primary">secA</name>
    <name type="ordered locus">Bcen_0087</name>
</gene>
<organism>
    <name type="scientific">Burkholderia orbicola (strain AU 1054)</name>
    <dbReference type="NCBI Taxonomy" id="331271"/>
    <lineage>
        <taxon>Bacteria</taxon>
        <taxon>Pseudomonadati</taxon>
        <taxon>Pseudomonadota</taxon>
        <taxon>Betaproteobacteria</taxon>
        <taxon>Burkholderiales</taxon>
        <taxon>Burkholderiaceae</taxon>
        <taxon>Burkholderia</taxon>
        <taxon>Burkholderia cepacia complex</taxon>
        <taxon>Burkholderia orbicola</taxon>
    </lineage>
</organism>
<comment type="function">
    <text evidence="1">Part of the Sec protein translocase complex. Interacts with the SecYEG preprotein conducting channel. Has a central role in coupling the hydrolysis of ATP to the transfer of proteins into and across the cell membrane, serving both as a receptor for the preprotein-SecB complex and as an ATP-driven molecular motor driving the stepwise translocation of polypeptide chains across the membrane.</text>
</comment>
<comment type="catalytic activity">
    <reaction evidence="1">
        <text>ATP + H2O + cellular proteinSide 1 = ADP + phosphate + cellular proteinSide 2.</text>
        <dbReference type="EC" id="7.4.2.8"/>
    </reaction>
</comment>
<comment type="cofactor">
    <cofactor evidence="1">
        <name>Zn(2+)</name>
        <dbReference type="ChEBI" id="CHEBI:29105"/>
    </cofactor>
    <text evidence="1">May bind 1 zinc ion per subunit.</text>
</comment>
<comment type="subunit">
    <text evidence="1">Monomer and homodimer. Part of the essential Sec protein translocation apparatus which comprises SecA, SecYEG and auxiliary proteins SecDF-YajC and YidC.</text>
</comment>
<comment type="subcellular location">
    <subcellularLocation>
        <location evidence="1">Cell inner membrane</location>
        <topology evidence="1">Peripheral membrane protein</topology>
        <orientation evidence="1">Cytoplasmic side</orientation>
    </subcellularLocation>
    <subcellularLocation>
        <location evidence="1">Cytoplasm</location>
    </subcellularLocation>
    <text evidence="1">Distribution is 50-50.</text>
</comment>
<comment type="similarity">
    <text evidence="1">Belongs to the SecA family.</text>
</comment>
<keyword id="KW-0067">ATP-binding</keyword>
<keyword id="KW-0997">Cell inner membrane</keyword>
<keyword id="KW-1003">Cell membrane</keyword>
<keyword id="KW-0963">Cytoplasm</keyword>
<keyword id="KW-0472">Membrane</keyword>
<keyword id="KW-0479">Metal-binding</keyword>
<keyword id="KW-0547">Nucleotide-binding</keyword>
<keyword id="KW-0653">Protein transport</keyword>
<keyword id="KW-1278">Translocase</keyword>
<keyword id="KW-0811">Translocation</keyword>
<keyword id="KW-0813">Transport</keyword>
<keyword id="KW-0862">Zinc</keyword>
<accession>Q1BZF4</accession>
<name>SECA_BURO1</name>
<dbReference type="EC" id="7.4.2.8" evidence="1"/>
<dbReference type="EMBL" id="CP000378">
    <property type="protein sequence ID" value="ABF75001.1"/>
    <property type="molecule type" value="Genomic_DNA"/>
</dbReference>
<dbReference type="SMR" id="Q1BZF4"/>
<dbReference type="HOGENOM" id="CLU_005314_3_0_4"/>
<dbReference type="GO" id="GO:0031522">
    <property type="term" value="C:cell envelope Sec protein transport complex"/>
    <property type="evidence" value="ECO:0007669"/>
    <property type="project" value="TreeGrafter"/>
</dbReference>
<dbReference type="GO" id="GO:0005829">
    <property type="term" value="C:cytosol"/>
    <property type="evidence" value="ECO:0007669"/>
    <property type="project" value="TreeGrafter"/>
</dbReference>
<dbReference type="GO" id="GO:0005886">
    <property type="term" value="C:plasma membrane"/>
    <property type="evidence" value="ECO:0007669"/>
    <property type="project" value="UniProtKB-SubCell"/>
</dbReference>
<dbReference type="GO" id="GO:0005524">
    <property type="term" value="F:ATP binding"/>
    <property type="evidence" value="ECO:0007669"/>
    <property type="project" value="UniProtKB-UniRule"/>
</dbReference>
<dbReference type="GO" id="GO:0046872">
    <property type="term" value="F:metal ion binding"/>
    <property type="evidence" value="ECO:0007669"/>
    <property type="project" value="UniProtKB-KW"/>
</dbReference>
<dbReference type="GO" id="GO:0008564">
    <property type="term" value="F:protein-exporting ATPase activity"/>
    <property type="evidence" value="ECO:0007669"/>
    <property type="project" value="UniProtKB-EC"/>
</dbReference>
<dbReference type="GO" id="GO:0065002">
    <property type="term" value="P:intracellular protein transmembrane transport"/>
    <property type="evidence" value="ECO:0007669"/>
    <property type="project" value="UniProtKB-UniRule"/>
</dbReference>
<dbReference type="GO" id="GO:0017038">
    <property type="term" value="P:protein import"/>
    <property type="evidence" value="ECO:0007669"/>
    <property type="project" value="InterPro"/>
</dbReference>
<dbReference type="GO" id="GO:0006605">
    <property type="term" value="P:protein targeting"/>
    <property type="evidence" value="ECO:0007669"/>
    <property type="project" value="UniProtKB-UniRule"/>
</dbReference>
<dbReference type="GO" id="GO:0043952">
    <property type="term" value="P:protein transport by the Sec complex"/>
    <property type="evidence" value="ECO:0007669"/>
    <property type="project" value="TreeGrafter"/>
</dbReference>
<dbReference type="CDD" id="cd17928">
    <property type="entry name" value="DEXDc_SecA"/>
    <property type="match status" value="1"/>
</dbReference>
<dbReference type="CDD" id="cd18803">
    <property type="entry name" value="SF2_C_secA"/>
    <property type="match status" value="1"/>
</dbReference>
<dbReference type="FunFam" id="3.40.50.300:FF:000081">
    <property type="entry name" value="Preprotein translocase subunit SecA"/>
    <property type="match status" value="1"/>
</dbReference>
<dbReference type="FunFam" id="3.40.50.300:FF:000113">
    <property type="entry name" value="Preprotein translocase subunit SecA"/>
    <property type="match status" value="1"/>
</dbReference>
<dbReference type="FunFam" id="3.90.1440.10:FF:000001">
    <property type="entry name" value="Preprotein translocase subunit SecA"/>
    <property type="match status" value="1"/>
</dbReference>
<dbReference type="FunFam" id="1.10.3060.10:FF:000003">
    <property type="entry name" value="Protein translocase subunit SecA"/>
    <property type="match status" value="1"/>
</dbReference>
<dbReference type="Gene3D" id="1.10.3060.10">
    <property type="entry name" value="Helical scaffold and wing domains of SecA"/>
    <property type="match status" value="1"/>
</dbReference>
<dbReference type="Gene3D" id="3.40.50.300">
    <property type="entry name" value="P-loop containing nucleotide triphosphate hydrolases"/>
    <property type="match status" value="2"/>
</dbReference>
<dbReference type="Gene3D" id="3.90.1440.10">
    <property type="entry name" value="SecA, preprotein cross-linking domain"/>
    <property type="match status" value="1"/>
</dbReference>
<dbReference type="HAMAP" id="MF_01382">
    <property type="entry name" value="SecA"/>
    <property type="match status" value="1"/>
</dbReference>
<dbReference type="InterPro" id="IPR014001">
    <property type="entry name" value="Helicase_ATP-bd"/>
</dbReference>
<dbReference type="InterPro" id="IPR001650">
    <property type="entry name" value="Helicase_C-like"/>
</dbReference>
<dbReference type="InterPro" id="IPR027417">
    <property type="entry name" value="P-loop_NTPase"/>
</dbReference>
<dbReference type="InterPro" id="IPR004027">
    <property type="entry name" value="SEC_C_motif"/>
</dbReference>
<dbReference type="InterPro" id="IPR000185">
    <property type="entry name" value="SecA"/>
</dbReference>
<dbReference type="InterPro" id="IPR020937">
    <property type="entry name" value="SecA_CS"/>
</dbReference>
<dbReference type="InterPro" id="IPR011115">
    <property type="entry name" value="SecA_DEAD"/>
</dbReference>
<dbReference type="InterPro" id="IPR014018">
    <property type="entry name" value="SecA_motor_DEAD"/>
</dbReference>
<dbReference type="InterPro" id="IPR011130">
    <property type="entry name" value="SecA_preprotein_X-link_dom"/>
</dbReference>
<dbReference type="InterPro" id="IPR044722">
    <property type="entry name" value="SecA_SF2_C"/>
</dbReference>
<dbReference type="InterPro" id="IPR011116">
    <property type="entry name" value="SecA_Wing/Scaffold"/>
</dbReference>
<dbReference type="InterPro" id="IPR036266">
    <property type="entry name" value="SecA_Wing/Scaffold_sf"/>
</dbReference>
<dbReference type="InterPro" id="IPR036670">
    <property type="entry name" value="SecA_X-link_sf"/>
</dbReference>
<dbReference type="NCBIfam" id="NF009538">
    <property type="entry name" value="PRK12904.1"/>
    <property type="match status" value="1"/>
</dbReference>
<dbReference type="NCBIfam" id="TIGR00963">
    <property type="entry name" value="secA"/>
    <property type="match status" value="1"/>
</dbReference>
<dbReference type="PANTHER" id="PTHR30612:SF0">
    <property type="entry name" value="CHLOROPLAST PROTEIN-TRANSPORTING ATPASE"/>
    <property type="match status" value="1"/>
</dbReference>
<dbReference type="PANTHER" id="PTHR30612">
    <property type="entry name" value="SECA INNER MEMBRANE COMPONENT OF SEC PROTEIN SECRETION SYSTEM"/>
    <property type="match status" value="1"/>
</dbReference>
<dbReference type="Pfam" id="PF21090">
    <property type="entry name" value="P-loop_SecA"/>
    <property type="match status" value="1"/>
</dbReference>
<dbReference type="Pfam" id="PF02810">
    <property type="entry name" value="SEC-C"/>
    <property type="match status" value="1"/>
</dbReference>
<dbReference type="Pfam" id="PF07517">
    <property type="entry name" value="SecA_DEAD"/>
    <property type="match status" value="1"/>
</dbReference>
<dbReference type="Pfam" id="PF01043">
    <property type="entry name" value="SecA_PP_bind"/>
    <property type="match status" value="1"/>
</dbReference>
<dbReference type="Pfam" id="PF07516">
    <property type="entry name" value="SecA_SW"/>
    <property type="match status" value="1"/>
</dbReference>
<dbReference type="PRINTS" id="PR00906">
    <property type="entry name" value="SECA"/>
</dbReference>
<dbReference type="SMART" id="SM00957">
    <property type="entry name" value="SecA_DEAD"/>
    <property type="match status" value="1"/>
</dbReference>
<dbReference type="SMART" id="SM00958">
    <property type="entry name" value="SecA_PP_bind"/>
    <property type="match status" value="1"/>
</dbReference>
<dbReference type="SUPFAM" id="SSF81886">
    <property type="entry name" value="Helical scaffold and wing domains of SecA"/>
    <property type="match status" value="1"/>
</dbReference>
<dbReference type="SUPFAM" id="SSF52540">
    <property type="entry name" value="P-loop containing nucleoside triphosphate hydrolases"/>
    <property type="match status" value="2"/>
</dbReference>
<dbReference type="SUPFAM" id="SSF81767">
    <property type="entry name" value="Pre-protein crosslinking domain of SecA"/>
    <property type="match status" value="1"/>
</dbReference>
<dbReference type="PROSITE" id="PS01312">
    <property type="entry name" value="SECA"/>
    <property type="match status" value="1"/>
</dbReference>
<dbReference type="PROSITE" id="PS51196">
    <property type="entry name" value="SECA_MOTOR_DEAD"/>
    <property type="match status" value="1"/>
</dbReference>
<feature type="chain" id="PRO_0000318329" description="Protein translocase subunit SecA">
    <location>
        <begin position="1"/>
        <end position="932"/>
    </location>
</feature>
<feature type="binding site" evidence="1">
    <location>
        <position position="87"/>
    </location>
    <ligand>
        <name>ATP</name>
        <dbReference type="ChEBI" id="CHEBI:30616"/>
    </ligand>
</feature>
<feature type="binding site" evidence="1">
    <location>
        <begin position="105"/>
        <end position="109"/>
    </location>
    <ligand>
        <name>ATP</name>
        <dbReference type="ChEBI" id="CHEBI:30616"/>
    </ligand>
</feature>
<feature type="binding site" evidence="1">
    <location>
        <position position="515"/>
    </location>
    <ligand>
        <name>ATP</name>
        <dbReference type="ChEBI" id="CHEBI:30616"/>
    </ligand>
</feature>
<feature type="binding site" evidence="1">
    <location>
        <position position="916"/>
    </location>
    <ligand>
        <name>Zn(2+)</name>
        <dbReference type="ChEBI" id="CHEBI:29105"/>
    </ligand>
</feature>
<feature type="binding site" evidence="1">
    <location>
        <position position="918"/>
    </location>
    <ligand>
        <name>Zn(2+)</name>
        <dbReference type="ChEBI" id="CHEBI:29105"/>
    </ligand>
</feature>
<feature type="binding site" evidence="1">
    <location>
        <position position="927"/>
    </location>
    <ligand>
        <name>Zn(2+)</name>
        <dbReference type="ChEBI" id="CHEBI:29105"/>
    </ligand>
</feature>
<feature type="binding site" evidence="1">
    <location>
        <position position="928"/>
    </location>
    <ligand>
        <name>Zn(2+)</name>
        <dbReference type="ChEBI" id="CHEBI:29105"/>
    </ligand>
</feature>